<comment type="function">
    <text evidence="1 2">The SMN complex catalyzes the assembly of small nuclear ribonucleoproteins (snRNPs), the building blocks of the spliceosome, and thereby plays an important role in the splicing of cellular pre-mRNAs (PubMed:9323130). Most spliceosomal snRNPs contain a common set of Sm proteins SNRPB, SNRPD1, SNRPD2, SNRPD3, SNRPE, SNRPF and SNRPG that assemble in a heptameric protein ring on the Sm site of the small nuclear RNA to form the core snRNP (Sm core) (By similarity). In the cytosol, the Sm proteins SNRPD1, SNRPD2, SNRPE, SNRPF and SNRPG (5Sm) are trapped in an inactive 6S pICln-Sm complex by the chaperone CLNS1A that controls the assembly of the core snRNP (By similarity). To assemble core snRNPs, the SMN complex accepts the trapped 5Sm proteins from CLNS1A (By similarity). Binding of snRNA inside 5Sm ultimately triggers eviction of the SMN complex, thereby allowing binding of SNRPD3 and SNRPB to complete assembly of the core snRNP (By similarity). Within the SMN complex, GEMIN2 constrains the conformation of 5Sm, thereby promoting 5Sm binding to snRNA containing the snRNP code (a nonameric Sm site and a 3'-adjacent stem-loop), thus preventing progression of assembly until a cognate substrate is bound (By similarity).</text>
</comment>
<comment type="subunit">
    <text>Forms a stable heteromeric complex with survival of motor neuron protein (SMN), GEMIN3 and GEMIN4. The SMN complex is associated with the spliceosomal snRNAs U1 and U5 in the cytoplasm of oocytes.</text>
</comment>
<comment type="subcellular location">
    <subcellularLocation>
        <location>Nucleus</location>
        <location>Gem</location>
    </subcellularLocation>
    <subcellularLocation>
        <location>Cytoplasm</location>
    </subcellularLocation>
    <text>Localized in subnuclear structures next to coiled bodies, called gems, which are highly enriched in spliceosomal snRNPs. Also found in the cytoplasm.</text>
</comment>
<comment type="similarity">
    <text evidence="3">Belongs to the gemin-2 family.</text>
</comment>
<dbReference type="EMBL" id="AF027151">
    <property type="protein sequence ID" value="AAB82298.1"/>
    <property type="molecule type" value="mRNA"/>
</dbReference>
<dbReference type="SMR" id="O42260"/>
<dbReference type="AGR" id="Xenbase:XB-GENE-941790"/>
<dbReference type="Xenbase" id="XB-GENE-941790">
    <property type="gene designation" value="gemin2.S"/>
</dbReference>
<dbReference type="Proteomes" id="UP000186698">
    <property type="component" value="Unplaced"/>
</dbReference>
<dbReference type="GO" id="GO:0005829">
    <property type="term" value="C:cytosol"/>
    <property type="evidence" value="ECO:0000250"/>
    <property type="project" value="UniProtKB"/>
</dbReference>
<dbReference type="GO" id="GO:0097504">
    <property type="term" value="C:Gemini of Cajal bodies"/>
    <property type="evidence" value="ECO:0007669"/>
    <property type="project" value="UniProtKB-SubCell"/>
</dbReference>
<dbReference type="GO" id="GO:0005634">
    <property type="term" value="C:nucleus"/>
    <property type="evidence" value="ECO:0000318"/>
    <property type="project" value="GO_Central"/>
</dbReference>
<dbReference type="GO" id="GO:0032797">
    <property type="term" value="C:SMN complex"/>
    <property type="evidence" value="ECO:0000250"/>
    <property type="project" value="UniProtKB"/>
</dbReference>
<dbReference type="GO" id="GO:0034719">
    <property type="term" value="C:SMN-Sm protein complex"/>
    <property type="evidence" value="ECO:0000250"/>
    <property type="project" value="UniProtKB"/>
</dbReference>
<dbReference type="GO" id="GO:0005681">
    <property type="term" value="C:spliceosomal complex"/>
    <property type="evidence" value="ECO:0007669"/>
    <property type="project" value="InterPro"/>
</dbReference>
<dbReference type="GO" id="GO:0000245">
    <property type="term" value="P:spliceosomal complex assembly"/>
    <property type="evidence" value="ECO:0007669"/>
    <property type="project" value="InterPro"/>
</dbReference>
<dbReference type="GO" id="GO:0000387">
    <property type="term" value="P:spliceosomal snRNP assembly"/>
    <property type="evidence" value="ECO:0000250"/>
    <property type="project" value="UniProtKB"/>
</dbReference>
<dbReference type="FunFam" id="1.20.58.1070:FF:000001">
    <property type="entry name" value="Gem-associated protein 2"/>
    <property type="match status" value="1"/>
</dbReference>
<dbReference type="Gene3D" id="1.20.5.220">
    <property type="match status" value="1"/>
</dbReference>
<dbReference type="Gene3D" id="1.20.58.1070">
    <property type="match status" value="1"/>
</dbReference>
<dbReference type="InterPro" id="IPR017364">
    <property type="entry name" value="GEMIN2"/>
</dbReference>
<dbReference type="InterPro" id="IPR035426">
    <property type="entry name" value="Gemin2/Brr1"/>
</dbReference>
<dbReference type="PANTHER" id="PTHR12794:SF0">
    <property type="entry name" value="GEM-ASSOCIATED PROTEIN 2"/>
    <property type="match status" value="1"/>
</dbReference>
<dbReference type="PANTHER" id="PTHR12794">
    <property type="entry name" value="GEMIN2"/>
    <property type="match status" value="1"/>
</dbReference>
<dbReference type="Pfam" id="PF04938">
    <property type="entry name" value="SIP1"/>
    <property type="match status" value="1"/>
</dbReference>
<dbReference type="PIRSF" id="PIRSF038038">
    <property type="entry name" value="SMN_Gemin2"/>
    <property type="match status" value="1"/>
</dbReference>
<accession>O42260</accession>
<gene>
    <name type="primary">gemin2</name>
    <name type="synonym">sip1</name>
</gene>
<proteinExistence type="evidence at transcript level"/>
<feature type="chain" id="PRO_0000087458" description="Gem-associated protein 2">
    <location>
        <begin position="1"/>
        <end position="259"/>
    </location>
</feature>
<keyword id="KW-0963">Cytoplasm</keyword>
<keyword id="KW-0507">mRNA processing</keyword>
<keyword id="KW-0508">mRNA splicing</keyword>
<keyword id="KW-0539">Nucleus</keyword>
<keyword id="KW-1185">Reference proteome</keyword>
<organism>
    <name type="scientific">Xenopus laevis</name>
    <name type="common">African clawed frog</name>
    <dbReference type="NCBI Taxonomy" id="8355"/>
    <lineage>
        <taxon>Eukaryota</taxon>
        <taxon>Metazoa</taxon>
        <taxon>Chordata</taxon>
        <taxon>Craniata</taxon>
        <taxon>Vertebrata</taxon>
        <taxon>Euteleostomi</taxon>
        <taxon>Amphibia</taxon>
        <taxon>Batrachia</taxon>
        <taxon>Anura</taxon>
        <taxon>Pipoidea</taxon>
        <taxon>Pipidae</taxon>
        <taxon>Xenopodinae</taxon>
        <taxon>Xenopus</taxon>
        <taxon>Xenopus</taxon>
    </lineage>
</organism>
<evidence type="ECO:0000250" key="1">
    <source>
        <dbReference type="UniProtKB" id="O14893"/>
    </source>
</evidence>
<evidence type="ECO:0000269" key="2">
    <source>
    </source>
</evidence>
<evidence type="ECO:0000305" key="3"/>
<reference key="1">
    <citation type="journal article" date="1997" name="Cell">
        <title>The spinal muscular atrophy disease gene product, SMN, and its associated protein SIP1 are in a complex with spliceosomal snRNP proteins.</title>
        <authorList>
            <person name="Liu Q."/>
            <person name="Fischer U."/>
            <person name="Wang F."/>
            <person name="Dreyfuss G."/>
        </authorList>
    </citation>
    <scope>NUCLEOTIDE SEQUENCE [MRNA]</scope>
    <source>
        <tissue>Ovary</tissue>
    </source>
</reference>
<reference key="2">
    <citation type="journal article" date="1997" name="Cell">
        <title>The SMN-SIP1 complex has an essential role in spliceosomal snRNP biogenesis.</title>
        <authorList>
            <person name="Fischer U."/>
            <person name="Liu Q."/>
            <person name="Dreyfuss G."/>
        </authorList>
    </citation>
    <scope>FUNCTION</scope>
    <source>
        <tissue>Ovary</tissue>
    </source>
</reference>
<name>GEMI2_XENLA</name>
<protein>
    <recommendedName>
        <fullName>Gem-associated protein 2</fullName>
        <shortName>Gemin-2</shortName>
    </recommendedName>
    <alternativeName>
        <fullName>Component of gems 2</fullName>
    </alternativeName>
    <alternativeName>
        <fullName>Survival of motor neuron protein-interacting protein 1</fullName>
        <shortName>SMN-interacting protein 1</shortName>
    </alternativeName>
</protein>
<sequence length="259" mass="29525">MPRLLPVEACDLPEDYDPSVPPRTPQEYLRRVQIEAARCPDVVIAQIDPKKLRKKQTVSISLSGCQPAPDGYSPSLRWQQQQVAQFSAVRQSLHKHRGHWRSQPLDSNVTMPSTEDEESWKKFCLGERLYSDLAAALNSESQHPGIDYIKVGFPPLLSIVSRMSQATVTSVLEYLVNWFEERNFTPELGRWLYALLACLEKPLLPEAHSLIRQLARRCSQIRAGVEHKEDDRVSPLNLFICLVGRYFEQRDLADCGDPS</sequence>